<keyword id="KW-1003">Cell membrane</keyword>
<keyword id="KW-0472">Membrane</keyword>
<keyword id="KW-0653">Protein transport</keyword>
<keyword id="KW-1185">Reference proteome</keyword>
<keyword id="KW-0811">Translocation</keyword>
<keyword id="KW-0812">Transmembrane</keyword>
<keyword id="KW-1133">Transmembrane helix</keyword>
<keyword id="KW-0813">Transport</keyword>
<proteinExistence type="inferred from homology"/>
<organism>
    <name type="scientific">Mycobacterium leprae (strain TN)</name>
    <dbReference type="NCBI Taxonomy" id="272631"/>
    <lineage>
        <taxon>Bacteria</taxon>
        <taxon>Bacillati</taxon>
        <taxon>Actinomycetota</taxon>
        <taxon>Actinomycetes</taxon>
        <taxon>Mycobacteriales</taxon>
        <taxon>Mycobacteriaceae</taxon>
        <taxon>Mycobacterium</taxon>
    </lineage>
</organism>
<sequence length="114" mass="12749">MESLVLLLLFLLIMGGFMFFASRRQRRSMQATIDLYNSLQPGDRVNTTSGLQATIIVVGDDTVDLEIAPGVVTTWMKLAIRDRILPDDAYMDEHEAEPGDFVYCDELEESDGSS</sequence>
<gene>
    <name type="primary">yajC</name>
    <name type="ordered locus">ML0486</name>
    <name type="ORF">B1177_C3_235</name>
    <name type="ORF">MLCB1259.04</name>
</gene>
<evidence type="ECO:0000250" key="1">
    <source>
        <dbReference type="UniProtKB" id="P0ADZ7"/>
    </source>
</evidence>
<evidence type="ECO:0000255" key="2"/>
<evidence type="ECO:0000305" key="3"/>
<comment type="function">
    <text evidence="1">The SecYEG-SecDF-YajC-YidC holo-translocon (HTL) protein secretase/insertase is a supercomplex required for protein secretion, insertion of proteins into membranes, and assembly of membrane protein complexes. While the SecYEG complex is essential for assembly of a number of proteins and complexes, the SecDF-YajC-YidC subcomplex facilitates these functions.</text>
</comment>
<comment type="subunit">
    <text evidence="1">Part of the SecDF-YidC-YajC translocase complex. The SecDF-YidC-YajC translocase forms a supercomplex with SecYEG, called the holo-translocon (HTL).</text>
</comment>
<comment type="subcellular location">
    <subcellularLocation>
        <location evidence="2">Cell membrane</location>
        <topology evidence="2">Single-pass membrane protein</topology>
    </subcellularLocation>
</comment>
<comment type="similarity">
    <text evidence="3">Belongs to the YajC family.</text>
</comment>
<comment type="sequence caution" evidence="3">
    <conflict type="erroneous initiation">
        <sequence resource="EMBL-CDS" id="AAA17099"/>
    </conflict>
    <text>Extended N-terminus.</text>
</comment>
<dbReference type="EMBL" id="U00011">
    <property type="protein sequence ID" value="AAA17099.1"/>
    <property type="status" value="ALT_INIT"/>
    <property type="molecule type" value="Genomic_DNA"/>
</dbReference>
<dbReference type="EMBL" id="AL023591">
    <property type="protein sequence ID" value="CAA19079.1"/>
    <property type="molecule type" value="Genomic_DNA"/>
</dbReference>
<dbReference type="EMBL" id="AL583918">
    <property type="protein sequence ID" value="CAC29994.1"/>
    <property type="molecule type" value="Genomic_DNA"/>
</dbReference>
<dbReference type="PIR" id="F86969">
    <property type="entry name" value="F86969"/>
</dbReference>
<dbReference type="PIR" id="S72735">
    <property type="entry name" value="S72735"/>
</dbReference>
<dbReference type="RefSeq" id="NP_301426.1">
    <property type="nucleotide sequence ID" value="NC_002677.1"/>
</dbReference>
<dbReference type="RefSeq" id="WP_010907750.1">
    <property type="nucleotide sequence ID" value="NC_002677.1"/>
</dbReference>
<dbReference type="SMR" id="Q49647"/>
<dbReference type="STRING" id="272631.gene:17574307"/>
<dbReference type="KEGG" id="mle:ML0486"/>
<dbReference type="PATRIC" id="fig|272631.5.peg.850"/>
<dbReference type="Leproma" id="ML0486"/>
<dbReference type="eggNOG" id="COG1862">
    <property type="taxonomic scope" value="Bacteria"/>
</dbReference>
<dbReference type="HOGENOM" id="CLU_116157_4_2_11"/>
<dbReference type="OrthoDB" id="2200301at2"/>
<dbReference type="Proteomes" id="UP000000806">
    <property type="component" value="Chromosome"/>
</dbReference>
<dbReference type="GO" id="GO:0005886">
    <property type="term" value="C:plasma membrane"/>
    <property type="evidence" value="ECO:0007669"/>
    <property type="project" value="UniProtKB-SubCell"/>
</dbReference>
<dbReference type="GO" id="GO:0015031">
    <property type="term" value="P:protein transport"/>
    <property type="evidence" value="ECO:0007669"/>
    <property type="project" value="UniProtKB-KW"/>
</dbReference>
<dbReference type="InterPro" id="IPR003849">
    <property type="entry name" value="Preprotein_translocase_YajC"/>
</dbReference>
<dbReference type="NCBIfam" id="TIGR00739">
    <property type="entry name" value="yajC"/>
    <property type="match status" value="1"/>
</dbReference>
<dbReference type="PANTHER" id="PTHR33909">
    <property type="entry name" value="SEC TRANSLOCON ACCESSORY COMPLEX SUBUNIT YAJC"/>
    <property type="match status" value="1"/>
</dbReference>
<dbReference type="PANTHER" id="PTHR33909:SF1">
    <property type="entry name" value="SEC TRANSLOCON ACCESSORY COMPLEX SUBUNIT YAJC"/>
    <property type="match status" value="1"/>
</dbReference>
<dbReference type="Pfam" id="PF02699">
    <property type="entry name" value="YajC"/>
    <property type="match status" value="1"/>
</dbReference>
<dbReference type="SMART" id="SM01323">
    <property type="entry name" value="YajC"/>
    <property type="match status" value="1"/>
</dbReference>
<reference key="1">
    <citation type="submission" date="1994-03" db="EMBL/GenBank/DDBJ databases">
        <authorList>
            <person name="Smith D.R."/>
            <person name="Robison K."/>
        </authorList>
    </citation>
    <scope>NUCLEOTIDE SEQUENCE [GENOMIC DNA]</scope>
</reference>
<reference key="2">
    <citation type="journal article" date="2001" name="Nature">
        <title>Massive gene decay in the leprosy bacillus.</title>
        <authorList>
            <person name="Cole S.T."/>
            <person name="Eiglmeier K."/>
            <person name="Parkhill J."/>
            <person name="James K.D."/>
            <person name="Thomson N.R."/>
            <person name="Wheeler P.R."/>
            <person name="Honore N."/>
            <person name="Garnier T."/>
            <person name="Churcher C.M."/>
            <person name="Harris D.E."/>
            <person name="Mungall K.L."/>
            <person name="Basham D."/>
            <person name="Brown D."/>
            <person name="Chillingworth T."/>
            <person name="Connor R."/>
            <person name="Davies R.M."/>
            <person name="Devlin K."/>
            <person name="Duthoy S."/>
            <person name="Feltwell T."/>
            <person name="Fraser A."/>
            <person name="Hamlin N."/>
            <person name="Holroyd S."/>
            <person name="Hornsby T."/>
            <person name="Jagels K."/>
            <person name="Lacroix C."/>
            <person name="Maclean J."/>
            <person name="Moule S."/>
            <person name="Murphy L.D."/>
            <person name="Oliver K."/>
            <person name="Quail M.A."/>
            <person name="Rajandream M.A."/>
            <person name="Rutherford K.M."/>
            <person name="Rutter S."/>
            <person name="Seeger K."/>
            <person name="Simon S."/>
            <person name="Simmonds M."/>
            <person name="Skelton J."/>
            <person name="Squares R."/>
            <person name="Squares S."/>
            <person name="Stevens K."/>
            <person name="Taylor K."/>
            <person name="Whitehead S."/>
            <person name="Woodward J.R."/>
            <person name="Barrell B.G."/>
        </authorList>
    </citation>
    <scope>NUCLEOTIDE SEQUENCE [LARGE SCALE GENOMIC DNA]</scope>
    <source>
        <strain>TN</strain>
    </source>
</reference>
<name>YAJC_MYCLE</name>
<protein>
    <recommendedName>
        <fullName>Sec translocon accessory complex subunit YajC</fullName>
    </recommendedName>
</protein>
<accession>Q49647</accession>
<feature type="chain" id="PRO_0000014141" description="Sec translocon accessory complex subunit YajC">
    <location>
        <begin position="1"/>
        <end position="114"/>
    </location>
</feature>
<feature type="transmembrane region" description="Helical" evidence="2">
    <location>
        <begin position="1"/>
        <end position="21"/>
    </location>
</feature>